<organism>
    <name type="scientific">Aspergillus sp. (strain MF297-2)</name>
    <dbReference type="NCBI Taxonomy" id="877550"/>
    <lineage>
        <taxon>Eukaryota</taxon>
        <taxon>Fungi</taxon>
        <taxon>Dikarya</taxon>
        <taxon>Ascomycota</taxon>
        <taxon>Pezizomycotina</taxon>
        <taxon>Eurotiomycetes</taxon>
        <taxon>Eurotiomycetidae</taxon>
        <taxon>Eurotiales</taxon>
        <taxon>Aspergillaceae</taxon>
        <taxon>Aspergillus</taxon>
    </lineage>
</organism>
<name>NOTF_ASPSM</name>
<accession>E0Y3X1</accession>
<keyword id="KW-0002">3D-structure</keyword>
<keyword id="KW-0017">Alkaloid metabolism</keyword>
<keyword id="KW-0637">Prenyltransferase</keyword>
<keyword id="KW-0808">Transferase</keyword>
<gene>
    <name evidence="7" type="primary">notF</name>
</gene>
<reference key="1">
    <citation type="journal article" date="2010" name="J. Am. Chem. Soc.">
        <title>Genome-based characterization of two prenylation steps in the assembly of the stephacidin and notoamide anticancer agents in a marine-derived Aspergillus sp.</title>
        <authorList>
            <person name="Ding Y."/>
            <person name="de Wet J.R."/>
            <person name="Cavalcoli J."/>
            <person name="Li S."/>
            <person name="Greshock T.J."/>
            <person name="Miller K.A."/>
            <person name="Finefield J.M."/>
            <person name="Sunderhaus J.D."/>
            <person name="McAfoos T.J."/>
            <person name="Tsukamoto S."/>
            <person name="Williams R.M."/>
            <person name="Sherman D.H."/>
        </authorList>
    </citation>
    <scope>NUCLEOTIDE SEQUENCE [GENOMIC DNA]</scope>
    <scope>FUNCTION</scope>
    <scope>CATALYTIC ACTIVITY</scope>
    <scope>BIOPHYSICOCHEMICAL PROPERTIES</scope>
    <scope>ACTIVITY REGULATION</scope>
    <scope>PATHWAY</scope>
    <scope>MUTAGENESIS OF GLU-108; ARG-122 AND TRP-424</scope>
    <source>
        <strain>MF297-2</strain>
    </source>
</reference>
<reference key="2">
    <citation type="journal article" date="2007" name="Angew. Chem. Int. Ed.">
        <title>Notoamides A-D: prenylated indole alkaloids isolated from a marine-derived fungus, Aspergillus sp.</title>
        <authorList>
            <person name="Kato H."/>
            <person name="Yoshida T."/>
            <person name="Tokue T."/>
            <person name="Nojiri Y."/>
            <person name="Hirota H."/>
            <person name="Ohta T."/>
            <person name="Williams R.M."/>
            <person name="Tsukamoto S."/>
        </authorList>
    </citation>
    <scope>BIOTECHNOLOGY</scope>
</reference>
<reference key="3">
    <citation type="journal article" date="2012" name="J. Am. Chem. Soc.">
        <title>Biochemical characterization of NotB as an FAD-dependent oxidase in the biosynthesis of notoamide indole alkaloids.</title>
        <authorList>
            <person name="Li S."/>
            <person name="Finefield J.M."/>
            <person name="Sunderhaus J.D."/>
            <person name="McAfoos T.J."/>
            <person name="Williams R.M."/>
            <person name="Sherman D.H."/>
        </authorList>
    </citation>
    <scope>FUNCTION</scope>
</reference>
<reference key="4">
    <citation type="journal article" date="2012" name="Med. Chem. Commun.">
        <title>Comparative analysis of the biosynthetic systems for fungal bicyclo[2.2.2]diazaoctane indole alkaloids: the (+)/(-)-notoamide, paraherquamide and malbrancheamide pathways.</title>
        <authorList>
            <person name="Li S."/>
            <person name="Anand K."/>
            <person name="Tran H."/>
            <person name="Yu F."/>
            <person name="Finefield J.M."/>
            <person name="Sunderhaus J.D."/>
            <person name="McAfoos T.J."/>
            <person name="Tsukamoto S."/>
            <person name="Williams R.M."/>
            <person name="Sherman D.H."/>
        </authorList>
    </citation>
    <scope>FUNCTION</scope>
</reference>
<protein>
    <recommendedName>
        <fullName evidence="7">Deoxybrevianamide E synthase notF</fullName>
        <ecNumber evidence="5">2.5.1.109</ecNumber>
    </recommendedName>
    <alternativeName>
        <fullName evidence="7">Reverse prenyltransferase notF</fullName>
    </alternativeName>
</protein>
<comment type="function">
    <text evidence="5 6 9">Deoxybrevianamide E synthase; part of the gene cluster that mediates the biosynthesis of notoamide, a fungal indole alkaloid that belongs to a family of natural products containing a characteristic bicyclo[2.2.2]diazaoctane core (PubMed:20722388). The first step of notoamide biosynthesis involves coupling of L-proline and L-tryptophan by the bimodular NRPS notE, to produce cyclo-L-tryptophan-L-proline called brevianamide F (PubMed:20722388). The reverse prenyltransferase notF then acts as a deoxybrevianamide E synthase and converts brevianamide F to deoxybrevianamide E via reverse prenylation at C-2 of the indole ring leading to the bicyclo[2.2.2]diazaoctane core (PubMed:20722388). Deoxybrevianamide E is further hydroxylated at C-6 of the indole ring, likely catalyzed by the cytochrome P450 monooxygenase notG, to yield 6-hydroxy-deoxybrevianamide E (Probable). 6-hydroxy-deoxybrevianamide E is a specific substrate of the prenyltransferase notC for normal prenylation at C-7 to produce 6-hydroxy-7-prenyl-deoxybrevianamide, also called notoamide S (PubMed:20722388). As the proposed pivotal branching point in notoamide biosynthesis, notoamide S can be diverted to notoamide E through an oxidative pyran ring closure putatively catalyzed by either notH cytochrome P450 monooxygenase or the notD FAD-linked oxidoreductase (Probable). This step would be followed by an indole 2,3-epoxidation-initiated pinacol-like rearrangement catalyzed by the notB FAD-dependent monooxygenase leading to the formation of notoamide C and notoamide D (PubMed:22188465). On the other hand notoamide S is converted to notoamide T by notH (or notD), a bifunctional oxidase that also functions as the intramolecular Diels-Alderase responsible for generation of (+)-notoamide T (Probable). To generate antipodal (-)-notoaminide T, notH' (or notD') in Aspergillus versicolor is expected to catalyze a Diels-Alder reaction leading to the opposite stereochemistry (Probable). The remaining oxidoreductase notD (or notH) likely catalyzes the oxidative pyran ring formation to yield (+)-stephacidin A (Probable). The FAD-dependent monooxygenase notI is highly similar to notB and is predicted to catalyze a similar conversion from (+)-stephacidin A to (-)-notoamide B via the 2,3-epoxidation of (+)-stephacidin A followed by a pinacol-type rearrangement (Probable). Finally, it remains unclear which enzyme could be responsible for the final hydroxylation steps leading to notoamide A and sclerotiamide (Probable).</text>
</comment>
<comment type="catalytic activity">
    <reaction evidence="5">
        <text>brevianamide F + dimethylallyl diphosphate = deoxybrevianamide E + diphosphate</text>
        <dbReference type="Rhea" id="RHEA:35943"/>
        <dbReference type="ChEBI" id="CHEBI:33019"/>
        <dbReference type="ChEBI" id="CHEBI:57623"/>
        <dbReference type="ChEBI" id="CHEBI:64530"/>
        <dbReference type="ChEBI" id="CHEBI:72948"/>
        <dbReference type="EC" id="2.5.1.109"/>
    </reaction>
    <physiologicalReaction direction="left-to-right" evidence="5">
        <dbReference type="Rhea" id="RHEA:35944"/>
    </physiologicalReaction>
</comment>
<comment type="activity regulation">
    <text evidence="5">Addition of 5 mM Mg(2+), Ca(2+) or Mn(2+) slightly enhances catalysis (about 100-120%) (PubMed:20722388). Significant reduction of enzyme activity (2%-35%) is observed with Cu(2+), Zn(2+), Fe(2+), or Sn(2+) (5 mM) (PubMed:20722388).</text>
</comment>
<comment type="biophysicochemical properties">
    <kinetics>
        <KM evidence="5">4.33 uM for brevianamide F</KM>
        <KM evidence="5">1.31 uM for dimethylallyl diphosphate (DMAPP)</KM>
        <Vmax evidence="5">0.89 uM/min/mg enzyme toward brevianamide F</Vmax>
        <Vmax evidence="5">1.18 uM/min/mg enzyme toward dimethylallyl diphosphate (DMAPP)</Vmax>
    </kinetics>
    <phDependence>
        <text evidence="5">Optimum pH is 6-9.</text>
    </phDependence>
    <temperatureDependence>
        <text evidence="5">Optimum temperature is 4 to 42 degrees Celsius.</text>
    </temperatureDependence>
</comment>
<comment type="pathway">
    <text evidence="5">Alkaloid biosynthesis.</text>
</comment>
<comment type="subunit">
    <text evidence="1">Monomer.</text>
</comment>
<comment type="biotechnology">
    <text evidence="4">Notoamides have been shown to exhibit antitumoral activities (PubMed:17304611). Notoamides A-C show moderate cytotoxicity against HeLa and L1210 cells with IC(50) values in the range of 22-52 mg/ml, but the IC(50) value of notoamide D is greater than 100 mg/ml (PubMed:17304611). Moreover, notoamide C induces G2/M-cell cycle arrest at a concentration of 6.3 mg/ml (PubMed:17304611).</text>
</comment>
<comment type="similarity">
    <text evidence="8">Belongs to the tryptophan dimethylallyltransferase family.</text>
</comment>
<proteinExistence type="evidence at protein level"/>
<evidence type="ECO:0000250" key="1">
    <source>
        <dbReference type="UniProtKB" id="I4AY86"/>
    </source>
</evidence>
<evidence type="ECO:0000250" key="2">
    <source>
        <dbReference type="UniProtKB" id="Q4WAW7"/>
    </source>
</evidence>
<evidence type="ECO:0000256" key="3">
    <source>
        <dbReference type="SAM" id="MobiDB-lite"/>
    </source>
</evidence>
<evidence type="ECO:0000269" key="4">
    <source>
    </source>
</evidence>
<evidence type="ECO:0000269" key="5">
    <source>
    </source>
</evidence>
<evidence type="ECO:0000269" key="6">
    <source>
    </source>
</evidence>
<evidence type="ECO:0000303" key="7">
    <source>
    </source>
</evidence>
<evidence type="ECO:0000305" key="8"/>
<evidence type="ECO:0000305" key="9">
    <source>
    </source>
</evidence>
<evidence type="ECO:0007829" key="10">
    <source>
        <dbReference type="PDB" id="6VY9"/>
    </source>
</evidence>
<evidence type="ECO:0007829" key="11">
    <source>
        <dbReference type="PDB" id="6VYA"/>
    </source>
</evidence>
<feature type="chain" id="PRO_0000448808" description="Deoxybrevianamide E synthase notF">
    <location>
        <begin position="1"/>
        <end position="452"/>
    </location>
</feature>
<feature type="region of interest" description="Disordered" evidence="3">
    <location>
        <begin position="1"/>
        <end position="38"/>
    </location>
</feature>
<feature type="compositionally biased region" description="Basic and acidic residues" evidence="3">
    <location>
        <begin position="1"/>
        <end position="19"/>
    </location>
</feature>
<feature type="compositionally biased region" description="Low complexity" evidence="3">
    <location>
        <begin position="21"/>
        <end position="38"/>
    </location>
</feature>
<feature type="binding site" evidence="2">
    <location>
        <position position="108"/>
    </location>
    <ligand>
        <name>brevianamide F</name>
        <dbReference type="ChEBI" id="CHEBI:64530"/>
    </ligand>
</feature>
<feature type="binding site" evidence="2">
    <location>
        <position position="122"/>
    </location>
    <ligand>
        <name>dimethylallyl diphosphate</name>
        <dbReference type="ChEBI" id="CHEBI:57623"/>
    </ligand>
</feature>
<feature type="binding site" evidence="2">
    <location>
        <position position="212"/>
    </location>
    <ligand>
        <name>dimethylallyl diphosphate</name>
        <dbReference type="ChEBI" id="CHEBI:57623"/>
    </ligand>
</feature>
<feature type="binding site" evidence="2">
    <location>
        <position position="214"/>
    </location>
    <ligand>
        <name>dimethylallyl diphosphate</name>
        <dbReference type="ChEBI" id="CHEBI:57623"/>
    </ligand>
</feature>
<feature type="binding site" evidence="2">
    <location>
        <position position="282"/>
    </location>
    <ligand>
        <name>dimethylallyl diphosphate</name>
        <dbReference type="ChEBI" id="CHEBI:57623"/>
    </ligand>
</feature>
<feature type="binding site" evidence="2">
    <location>
        <position position="284"/>
    </location>
    <ligand>
        <name>dimethylallyl diphosphate</name>
        <dbReference type="ChEBI" id="CHEBI:57623"/>
    </ligand>
</feature>
<feature type="binding site" evidence="2">
    <location>
        <position position="371"/>
    </location>
    <ligand>
        <name>dimethylallyl diphosphate</name>
        <dbReference type="ChEBI" id="CHEBI:57623"/>
    </ligand>
</feature>
<feature type="binding site" evidence="2">
    <location>
        <position position="436"/>
    </location>
    <ligand>
        <name>dimethylallyl diphosphate</name>
        <dbReference type="ChEBI" id="CHEBI:57623"/>
    </ligand>
</feature>
<feature type="binding site" evidence="2">
    <location>
        <position position="440"/>
    </location>
    <ligand>
        <name>dimethylallyl diphosphate</name>
        <dbReference type="ChEBI" id="CHEBI:57623"/>
    </ligand>
</feature>
<feature type="site" description="Required for regioselectivity" evidence="2">
    <location>
        <position position="124"/>
    </location>
</feature>
<feature type="mutagenesis site" description="Leads to less than 8% catalytic activity." evidence="5">
    <original>E</original>
    <variation>D</variation>
    <variation>G</variation>
    <location>
        <position position="108"/>
    </location>
</feature>
<feature type="mutagenesis site" description="Leads to less than 2% catalytic activity." evidence="5">
    <original>R</original>
    <variation>G</variation>
    <variation>H</variation>
    <location>
        <position position="122"/>
    </location>
</feature>
<feature type="mutagenesis site" description="Leads to less than 2% catalytic activity." evidence="5">
    <original>W</original>
    <variation>G</variation>
    <location>
        <position position="424"/>
    </location>
</feature>
<feature type="mutagenesis site" description="Retains about 25% catalyticactivity." evidence="5">
    <original>W</original>
    <variation>Y</variation>
    <location>
        <position position="424"/>
    </location>
</feature>
<feature type="helix" evidence="11">
    <location>
        <begin position="35"/>
        <end position="41"/>
    </location>
</feature>
<feature type="helix" evidence="11">
    <location>
        <begin position="47"/>
        <end position="66"/>
    </location>
</feature>
<feature type="helix" evidence="11">
    <location>
        <begin position="71"/>
        <end position="84"/>
    </location>
</feature>
<feature type="helix" evidence="11">
    <location>
        <begin position="87"/>
        <end position="89"/>
    </location>
</feature>
<feature type="strand" evidence="11">
    <location>
        <begin position="101"/>
        <end position="103"/>
    </location>
</feature>
<feature type="strand" evidence="11">
    <location>
        <begin position="106"/>
        <end position="113"/>
    </location>
</feature>
<feature type="strand" evidence="11">
    <location>
        <begin position="115"/>
        <end position="117"/>
    </location>
</feature>
<feature type="strand" evidence="11">
    <location>
        <begin position="119"/>
        <end position="125"/>
    </location>
</feature>
<feature type="strand" evidence="11">
    <location>
        <begin position="134"/>
        <end position="137"/>
    </location>
</feature>
<feature type="helix" evidence="11">
    <location>
        <begin position="142"/>
        <end position="153"/>
    </location>
</feature>
<feature type="helix" evidence="11">
    <location>
        <begin position="162"/>
        <end position="169"/>
    </location>
</feature>
<feature type="helix" evidence="11">
    <location>
        <begin position="175"/>
        <end position="181"/>
    </location>
</feature>
<feature type="turn" evidence="10">
    <location>
        <begin position="186"/>
        <end position="188"/>
    </location>
</feature>
<feature type="strand" evidence="11">
    <location>
        <begin position="197"/>
        <end position="204"/>
    </location>
</feature>
<feature type="turn" evidence="11">
    <location>
        <begin position="205"/>
        <end position="207"/>
    </location>
</feature>
<feature type="strand" evidence="11">
    <location>
        <begin position="208"/>
        <end position="215"/>
    </location>
</feature>
<feature type="helix" evidence="11">
    <location>
        <begin position="218"/>
        <end position="223"/>
    </location>
</feature>
<feature type="helix" evidence="11">
    <location>
        <begin position="228"/>
        <end position="238"/>
    </location>
</feature>
<feature type="turn" evidence="11">
    <location>
        <begin position="239"/>
        <end position="242"/>
    </location>
</feature>
<feature type="helix" evidence="11">
    <location>
        <begin position="247"/>
        <end position="260"/>
    </location>
</feature>
<feature type="strand" evidence="11">
    <location>
        <begin position="268"/>
        <end position="274"/>
    </location>
</feature>
<feature type="strand" evidence="11">
    <location>
        <begin position="281"/>
        <end position="289"/>
    </location>
</feature>
<feature type="helix" evidence="11">
    <location>
        <begin position="292"/>
        <end position="299"/>
    </location>
</feature>
<feature type="turn" evidence="11">
    <location>
        <begin position="300"/>
        <end position="305"/>
    </location>
</feature>
<feature type="helix" evidence="11">
    <location>
        <begin position="309"/>
        <end position="325"/>
    </location>
</feature>
<feature type="strand" evidence="11">
    <location>
        <begin position="353"/>
        <end position="359"/>
    </location>
</feature>
<feature type="strand" evidence="11">
    <location>
        <begin position="361"/>
        <end position="365"/>
    </location>
</feature>
<feature type="strand" evidence="11">
    <location>
        <begin position="367"/>
        <end position="373"/>
    </location>
</feature>
<feature type="helix" evidence="11">
    <location>
        <begin position="379"/>
        <end position="393"/>
    </location>
</feature>
<feature type="helix" evidence="11">
    <location>
        <begin position="396"/>
        <end position="400"/>
    </location>
</feature>
<feature type="helix" evidence="11">
    <location>
        <begin position="402"/>
        <end position="407"/>
    </location>
</feature>
<feature type="strand" evidence="10">
    <location>
        <begin position="411"/>
        <end position="413"/>
    </location>
</feature>
<feature type="turn" evidence="11">
    <location>
        <begin position="415"/>
        <end position="417"/>
    </location>
</feature>
<feature type="strand" evidence="11">
    <location>
        <begin position="422"/>
        <end position="430"/>
    </location>
</feature>
<feature type="turn" evidence="11">
    <location>
        <begin position="431"/>
        <end position="433"/>
    </location>
</feature>
<feature type="strand" evidence="11">
    <location>
        <begin position="434"/>
        <end position="441"/>
    </location>
</feature>
<dbReference type="EC" id="2.5.1.109" evidence="5"/>
<dbReference type="EMBL" id="GU564535">
    <property type="protein sequence ID" value="ADM34132.1"/>
    <property type="molecule type" value="Genomic_DNA"/>
</dbReference>
<dbReference type="EMBL" id="HM622670">
    <property type="protein sequence ID" value="ADM34139.1"/>
    <property type="molecule type" value="Genomic_DNA"/>
</dbReference>
<dbReference type="PDB" id="6VY9">
    <property type="method" value="X-ray"/>
    <property type="resolution" value="3.19 A"/>
    <property type="chains" value="A/B/C/D/E/F/G/H=1-452"/>
</dbReference>
<dbReference type="PDB" id="6VYA">
    <property type="method" value="X-ray"/>
    <property type="resolution" value="3.00 A"/>
    <property type="chains" value="A/B/C/D/E/F/G/H/I/J/K/L/M/N/O/P/Q/R/S/T/U/V/W/X=1-452"/>
</dbReference>
<dbReference type="PDBsum" id="6VY9"/>
<dbReference type="PDBsum" id="6VYA"/>
<dbReference type="SMR" id="E0Y3X1"/>
<dbReference type="KEGG" id="ag:ADM34132"/>
<dbReference type="BRENDA" id="2.5.1.109">
    <property type="organism ID" value="530"/>
</dbReference>
<dbReference type="GO" id="GO:0004659">
    <property type="term" value="F:prenyltransferase activity"/>
    <property type="evidence" value="ECO:0007669"/>
    <property type="project" value="UniProtKB-KW"/>
</dbReference>
<dbReference type="GO" id="GO:0009820">
    <property type="term" value="P:alkaloid metabolic process"/>
    <property type="evidence" value="ECO:0007669"/>
    <property type="project" value="UniProtKB-KW"/>
</dbReference>
<dbReference type="CDD" id="cd13929">
    <property type="entry name" value="PT-DMATS_CymD"/>
    <property type="match status" value="1"/>
</dbReference>
<dbReference type="InterPro" id="IPR033964">
    <property type="entry name" value="Aro_prenylTrfase"/>
</dbReference>
<dbReference type="InterPro" id="IPR017795">
    <property type="entry name" value="Aro_prenylTrfase_DMATS"/>
</dbReference>
<dbReference type="InterPro" id="IPR012148">
    <property type="entry name" value="DMATS-type_fun"/>
</dbReference>
<dbReference type="NCBIfam" id="TIGR03429">
    <property type="entry name" value="arom_pren_DMATS"/>
    <property type="match status" value="1"/>
</dbReference>
<dbReference type="PANTHER" id="PTHR40627">
    <property type="entry name" value="INDOLE PRENYLTRANSFERASE TDIB-RELATED"/>
    <property type="match status" value="1"/>
</dbReference>
<dbReference type="PANTHER" id="PTHR40627:SF3">
    <property type="entry name" value="PRENYLTRANSFERASE ASQH2-RELATED"/>
    <property type="match status" value="1"/>
</dbReference>
<dbReference type="Pfam" id="PF11991">
    <property type="entry name" value="Trp_DMAT"/>
    <property type="match status" value="1"/>
</dbReference>
<dbReference type="PIRSF" id="PIRSF000509">
    <property type="entry name" value="Trp_DMAT"/>
    <property type="match status" value="1"/>
</dbReference>
<dbReference type="SFLD" id="SFLDS00036">
    <property type="entry name" value="Aromatic_Prenyltransferase"/>
    <property type="match status" value="1"/>
</dbReference>
<dbReference type="SFLD" id="SFLDG01162">
    <property type="entry name" value="I"/>
    <property type="match status" value="1"/>
</dbReference>
<sequence length="452" mass="51608">MTAPELRVDTFRAPEDAPKEPSAQQPRLPSSPSPAQALASYHHFPTNDQERWWEETGSLFSRFLEAGQYGLPQQYQFMFFFMHHLIPALGPYPQKWRSTISRSGLPIEFSLNFQKGSHRLLRIGFEPVSFLSGSSQDPFNRIPITDLLNRLSKLQLSNFDTPFFQHLLSKFQLSLSEVRQLQKQGSGPDAHPLKSQAAFGFDFNPDGAILVKGYVFPYLKAKAADVPVGTLIAEAVRTIDVERNQFTHAFGLINDYMQESTGYNEYTFLSCDFVETSEQRLKIYGAHTEVTWAKIAEMWTLGGRLIEEPEIIAGLARLKQIWSLLQIGEGSRAFKGGFDYDKSSATDQIASPIIWNYEIHPGSRFPVPKFYLPVHGENDLHVARALAQFWDSLGWPEHACAYPDTLQQLYPDQDISQTTRLQSWISYSYTAKRGVYMSVYYHSQSTYLWEED</sequence>